<sequence length="511" mass="61327">MEKFEGYSEKQKSRQQYFVYPLLFQEYIYAFAHDYGLNGSEPVEIVSWNNKKFSSLLVKRLIIRMYQQNFLDNSVNHPNQDRLLDYKIFFYSEFYSQILSEGFAIVVEIPFSLRELSCPKEKEIPKFQNLRSIHSIFPFLEDKFLHLDYLSHIEIPYPIHLEILVQLLQYRIQDVPSLHLLRFFLNYYSNWNSFITSMKSILFFQKENKRLVKFLYNSYVSEYEFFLLFLRKQSSCLPLAYSGTFLERIHFSRKMEHFGIMYPGFSRKTLWFFMDPLIHYVRYQGKAILASKGSFFLKKKWKCYLINFWQYYFFFWTQPRRIHINQLANSCFDFMGYLSSVPKSPLLVRNQMLENSFLIDTRMKKFDTIVPATLLIGYLSKAQFCTGSGHPISKPIWTDLSDWDILDRFGRICRNLFHYHSGSSKKRTLYRLKYILRLSCARTLARKHKSTVRTFMQRLGSAFLEEFFTEEEQVFSLMFTKTTLFSFSGSHTERIWYLDIIGINDLVNPLN</sequence>
<evidence type="ECO:0000255" key="1">
    <source>
        <dbReference type="HAMAP-Rule" id="MF_01390"/>
    </source>
</evidence>
<name>MATK_HORVV</name>
<accession>Q76LM0</accession>
<feature type="chain" id="PRO_0000143426" description="Maturase K">
    <location>
        <begin position="1"/>
        <end position="511"/>
    </location>
</feature>
<protein>
    <recommendedName>
        <fullName evidence="1">Maturase K</fullName>
    </recommendedName>
    <alternativeName>
        <fullName evidence="1">Intron maturase</fullName>
    </alternativeName>
</protein>
<organism>
    <name type="scientific">Hordeum vulgare subsp. vulgare</name>
    <name type="common">Domesticated barley</name>
    <dbReference type="NCBI Taxonomy" id="112509"/>
    <lineage>
        <taxon>Eukaryota</taxon>
        <taxon>Viridiplantae</taxon>
        <taxon>Streptophyta</taxon>
        <taxon>Embryophyta</taxon>
        <taxon>Tracheophyta</taxon>
        <taxon>Spermatophyta</taxon>
        <taxon>Magnoliopsida</taxon>
        <taxon>Liliopsida</taxon>
        <taxon>Poales</taxon>
        <taxon>Poaceae</taxon>
        <taxon>BOP clade</taxon>
        <taxon>Pooideae</taxon>
        <taxon>Triticodae</taxon>
        <taxon>Triticeae</taxon>
        <taxon>Hordeinae</taxon>
        <taxon>Hordeum</taxon>
    </lineage>
</organism>
<proteinExistence type="inferred from homology"/>
<comment type="function">
    <text evidence="1">Usually encoded in the trnK tRNA gene intron. Probably assists in splicing its own and other chloroplast group II introns.</text>
</comment>
<comment type="subcellular location">
    <subcellularLocation>
        <location>Plastid</location>
        <location>Chloroplast</location>
    </subcellularLocation>
</comment>
<comment type="similarity">
    <text evidence="1">Belongs to the intron maturase 2 family. MatK subfamily.</text>
</comment>
<dbReference type="EMBL" id="AB078138">
    <property type="protein sequence ID" value="BAC54890.1"/>
    <property type="molecule type" value="Genomic_DNA"/>
</dbReference>
<dbReference type="RefSeq" id="YP_874634.1">
    <property type="nucleotide sequence ID" value="NC_008590.1"/>
</dbReference>
<dbReference type="FunCoup" id="Q76LM0">
    <property type="interactions" value="1"/>
</dbReference>
<dbReference type="STRING" id="112509.Q76LM0"/>
<dbReference type="PaxDb" id="4513-AGP50736"/>
<dbReference type="EnsemblPlants" id="HORVU.MOREX.r3.UnG0754540.1">
    <property type="protein sequence ID" value="HORVU.MOREX.r3.UnG0754540.1.CDS1"/>
    <property type="gene ID" value="HORVU.MOREX.r3.UnG0754540"/>
</dbReference>
<dbReference type="EnsemblPlants" id="HORVU.MOREX.r3.UnG0755690.1">
    <property type="protein sequence ID" value="HORVU.MOREX.r3.UnG0755690.1.CDS1"/>
    <property type="gene ID" value="HORVU.MOREX.r3.UnG0755690"/>
</dbReference>
<dbReference type="EnsemblPlants" id="HORVU.MOREX.r3.UnG0756060.1">
    <property type="protein sequence ID" value="HORVU.MOREX.r3.UnG0756060.1.CDS1"/>
    <property type="gene ID" value="HORVU.MOREX.r3.UnG0756060"/>
</dbReference>
<dbReference type="EnsemblPlants" id="HORVU.MOREX.r3.UnG0761920.1">
    <property type="protein sequence ID" value="HORVU.MOREX.r3.UnG0761920.1.CDS1"/>
    <property type="gene ID" value="HORVU.MOREX.r3.UnG0761920"/>
</dbReference>
<dbReference type="EnsemblPlants" id="HORVU.MOREX.r3.UnG0762290.1">
    <property type="protein sequence ID" value="HORVU.MOREX.r3.UnG0762290.1.CDS1"/>
    <property type="gene ID" value="HORVU.MOREX.r3.UnG0762290"/>
</dbReference>
<dbReference type="EnsemblPlants" id="HORVU.MOREX.r3.UnG0764200.1">
    <property type="protein sequence ID" value="HORVU.MOREX.r3.UnG0764200.1.CDS1"/>
    <property type="gene ID" value="HORVU.MOREX.r3.UnG0764200"/>
</dbReference>
<dbReference type="EnsemblPlants" id="HORVU.MOREX.r3.UnG0764900.1">
    <property type="protein sequence ID" value="HORVU.MOREX.r3.UnG0764900.1.CDS1"/>
    <property type="gene ID" value="HORVU.MOREX.r3.UnG0764900"/>
</dbReference>
<dbReference type="EnsemblPlants" id="HORVU.MOREX.r3.UnG0766480.1">
    <property type="protein sequence ID" value="HORVU.MOREX.r3.UnG0766480.1.CDS1"/>
    <property type="gene ID" value="HORVU.MOREX.r3.UnG0766480"/>
</dbReference>
<dbReference type="EnsemblPlants" id="HORVU.MOREX.r3.UnG0767090.1">
    <property type="protein sequence ID" value="HORVU.MOREX.r3.UnG0767090.1.CDS1"/>
    <property type="gene ID" value="HORVU.MOREX.r3.UnG0767090"/>
</dbReference>
<dbReference type="EnsemblPlants" id="HORVU.MOREX.r3.UnG0770510.1">
    <property type="protein sequence ID" value="HORVU.MOREX.r3.UnG0770510.1.CDS1"/>
    <property type="gene ID" value="HORVU.MOREX.r3.UnG0770510"/>
</dbReference>
<dbReference type="EnsemblPlants" id="HORVU.MOREX.r3.UnG0772490.1">
    <property type="protein sequence ID" value="HORVU.MOREX.r3.UnG0772490.1.CDS1"/>
    <property type="gene ID" value="HORVU.MOREX.r3.UnG0772490"/>
</dbReference>
<dbReference type="EnsemblPlants" id="HORVU.MOREX.r3.UnG0772870.1">
    <property type="protein sequence ID" value="HORVU.MOREX.r3.UnG0772870.1.CDS1"/>
    <property type="gene ID" value="HORVU.MOREX.r3.UnG0772870"/>
</dbReference>
<dbReference type="EnsemblPlants" id="HORVU.MOREX.r3.UnG0774210.1">
    <property type="protein sequence ID" value="HORVU.MOREX.r3.UnG0774210.1.CDS1"/>
    <property type="gene ID" value="HORVU.MOREX.r3.UnG0774210"/>
</dbReference>
<dbReference type="EnsemblPlants" id="HORVU.MOREX.r3.UnG0775100.1">
    <property type="protein sequence ID" value="HORVU.MOREX.r3.UnG0775100.1.CDS1"/>
    <property type="gene ID" value="HORVU.MOREX.r3.UnG0775100"/>
</dbReference>
<dbReference type="EnsemblPlants" id="HORVU.MOREX.r3.UnG0776440.1">
    <property type="protein sequence ID" value="HORVU.MOREX.r3.UnG0776440.1.CDS1"/>
    <property type="gene ID" value="HORVU.MOREX.r3.UnG0776440"/>
</dbReference>
<dbReference type="EnsemblPlants" id="HORVU.MOREX.r3.UnG0779010.1">
    <property type="protein sequence ID" value="HORVU.MOREX.r3.UnG0779010.1.CDS1"/>
    <property type="gene ID" value="HORVU.MOREX.r3.UnG0779010"/>
</dbReference>
<dbReference type="EnsemblPlants" id="HORVU.MOREX.r3.UnG0779800.1">
    <property type="protein sequence ID" value="HORVU.MOREX.r3.UnG0779800.1.CDS1"/>
    <property type="gene ID" value="HORVU.MOREX.r3.UnG0779800"/>
</dbReference>
<dbReference type="EnsemblPlants" id="HORVU.MOREX.r3.UnG0781330.1">
    <property type="protein sequence ID" value="HORVU.MOREX.r3.UnG0781330.1.CDS1"/>
    <property type="gene ID" value="HORVU.MOREX.r3.UnG0781330"/>
</dbReference>
<dbReference type="EnsemblPlants" id="HORVU.MOREX.r3.UnG0785270.1">
    <property type="protein sequence ID" value="HORVU.MOREX.r3.UnG0785270.1.CDS1"/>
    <property type="gene ID" value="HORVU.MOREX.r3.UnG0785270"/>
</dbReference>
<dbReference type="EnsemblPlants" id="HORVU.MOREX.r3.UnG0787950.1">
    <property type="protein sequence ID" value="HORVU.MOREX.r3.UnG0787950.1.CDS1"/>
    <property type="gene ID" value="HORVU.MOREX.r3.UnG0787950"/>
</dbReference>
<dbReference type="EnsemblPlants" id="HORVU.MOREX.r3.UnG0789400.1">
    <property type="protein sequence ID" value="HORVU.MOREX.r3.UnG0789400.1.CDS1"/>
    <property type="gene ID" value="HORVU.MOREX.r3.UnG0789400"/>
</dbReference>
<dbReference type="EnsemblPlants" id="HORVU.MOREX.r3.UnG0791800.1">
    <property type="protein sequence ID" value="HORVU.MOREX.r3.UnG0791800.1.CDS1"/>
    <property type="gene ID" value="HORVU.MOREX.r3.UnG0791800"/>
</dbReference>
<dbReference type="EnsemblPlants" id="HORVU.MOREX.r3.UnG0794730.1">
    <property type="protein sequence ID" value="HORVU.MOREX.r3.UnG0794730.1.CDS1"/>
    <property type="gene ID" value="HORVU.MOREX.r3.UnG0794730"/>
</dbReference>
<dbReference type="EnsemblPlants" id="HORVU.MOREX.r3.UnG0796310.1">
    <property type="protein sequence ID" value="HORVU.MOREX.r3.UnG0796310.1.CDS1"/>
    <property type="gene ID" value="HORVU.MOREX.r3.UnG0796310"/>
</dbReference>
<dbReference type="EnsemblPlants" id="HORVU.MOREX.r3.UnG0796820.1">
    <property type="protein sequence ID" value="HORVU.MOREX.r3.UnG0796820.1.CDS1"/>
    <property type="gene ID" value="HORVU.MOREX.r3.UnG0796820"/>
</dbReference>
<dbReference type="EnsemblPlants" id="HORVU.MOREX.r3.UnG0797240.1">
    <property type="protein sequence ID" value="HORVU.MOREX.r3.UnG0797240.1.CDS1"/>
    <property type="gene ID" value="HORVU.MOREX.r3.UnG0797240"/>
</dbReference>
<dbReference type="EnsemblPlants" id="HORVU.MOREX.r3.UnG0798790.1">
    <property type="protein sequence ID" value="HORVU.MOREX.r3.UnG0798790.1.CDS1"/>
    <property type="gene ID" value="HORVU.MOREX.r3.UnG0798790"/>
</dbReference>
<dbReference type="EnsemblPlants" id="HORVU.MOREX.r3.UnG0801270.1">
    <property type="protein sequence ID" value="HORVU.MOREX.r3.UnG0801270.1.CDS1"/>
    <property type="gene ID" value="HORVU.MOREX.r3.UnG0801270"/>
</dbReference>
<dbReference type="EnsemblPlants" id="HORVU.MOREX.r3.UnG0803440.1">
    <property type="protein sequence ID" value="HORVU.MOREX.r3.UnG0803440.1.CDS1"/>
    <property type="gene ID" value="HORVU.MOREX.r3.UnG0803440"/>
</dbReference>
<dbReference type="EnsemblPlants" id="HORVU.MOREX.r3.UnG0804970.1">
    <property type="protein sequence ID" value="HORVU.MOREX.r3.UnG0804970.1.CDS1"/>
    <property type="gene ID" value="HORVU.MOREX.r3.UnG0804970"/>
</dbReference>
<dbReference type="EnsemblPlants" id="HORVU.MOREX.r3.UnG0807780.1">
    <property type="protein sequence ID" value="HORVU.MOREX.r3.UnG0807780.1.CDS1"/>
    <property type="gene ID" value="HORVU.MOREX.r3.UnG0807780"/>
</dbReference>
<dbReference type="EnsemblPlants" id="HORVU.MOREX.r3.UnG0808940.1">
    <property type="protein sequence ID" value="HORVU.MOREX.r3.UnG0808940.1.CDS1"/>
    <property type="gene ID" value="HORVU.MOREX.r3.UnG0808940"/>
</dbReference>
<dbReference type="EnsemblPlants" id="HORVU.MOREX.r3.UnG0811110.1">
    <property type="protein sequence ID" value="HORVU.MOREX.r3.UnG0811110.1.CDS1"/>
    <property type="gene ID" value="HORVU.MOREX.r3.UnG0811110"/>
</dbReference>
<dbReference type="EnsemblPlants" id="HORVU.MOREX.r3.UnG0811310.1">
    <property type="protein sequence ID" value="HORVU.MOREX.r3.UnG0811310.1.CDS1"/>
    <property type="gene ID" value="HORVU.MOREX.r3.UnG0811310"/>
</dbReference>
<dbReference type="EnsemblPlants" id="HORVU.MOREX.r3.UnG0811780.1">
    <property type="protein sequence ID" value="HORVU.MOREX.r3.UnG0811780.1.CDS1"/>
    <property type="gene ID" value="HORVU.MOREX.r3.UnG0811780"/>
</dbReference>
<dbReference type="EnsemblPlants" id="HORVU.MOREX.r3.UnG0814020.1">
    <property type="protein sequence ID" value="HORVU.MOREX.r3.UnG0814020.1.CDS1"/>
    <property type="gene ID" value="HORVU.MOREX.r3.UnG0814020"/>
</dbReference>
<dbReference type="EnsemblPlants" id="HORVU.MOREX.r3.UnG0815490.1">
    <property type="protein sequence ID" value="HORVU.MOREX.r3.UnG0815490.1.CDS1"/>
    <property type="gene ID" value="HORVU.MOREX.r3.UnG0815490"/>
</dbReference>
<dbReference type="EnsemblPlants" id="HORVU.MOREX.r3.UnG0816610.1">
    <property type="protein sequence ID" value="HORVU.MOREX.r3.UnG0816610.1.CDS1"/>
    <property type="gene ID" value="HORVU.MOREX.r3.UnG0816610"/>
</dbReference>
<dbReference type="GeneID" id="4525145"/>
<dbReference type="Gramene" id="HORVU.MOREX.r3.UnG0754540.1">
    <property type="protein sequence ID" value="HORVU.MOREX.r3.UnG0754540.1.CDS1"/>
    <property type="gene ID" value="HORVU.MOREX.r3.UnG0754540"/>
</dbReference>
<dbReference type="Gramene" id="HORVU.MOREX.r3.UnG0755690.1">
    <property type="protein sequence ID" value="HORVU.MOREX.r3.UnG0755690.1.CDS1"/>
    <property type="gene ID" value="HORVU.MOREX.r3.UnG0755690"/>
</dbReference>
<dbReference type="Gramene" id="HORVU.MOREX.r3.UnG0756060.1">
    <property type="protein sequence ID" value="HORVU.MOREX.r3.UnG0756060.1.CDS1"/>
    <property type="gene ID" value="HORVU.MOREX.r3.UnG0756060"/>
</dbReference>
<dbReference type="Gramene" id="HORVU.MOREX.r3.UnG0761920.1">
    <property type="protein sequence ID" value="HORVU.MOREX.r3.UnG0761920.1.CDS1"/>
    <property type="gene ID" value="HORVU.MOREX.r3.UnG0761920"/>
</dbReference>
<dbReference type="Gramene" id="HORVU.MOREX.r3.UnG0762290.1">
    <property type="protein sequence ID" value="HORVU.MOREX.r3.UnG0762290.1.CDS1"/>
    <property type="gene ID" value="HORVU.MOREX.r3.UnG0762290"/>
</dbReference>
<dbReference type="Gramene" id="HORVU.MOREX.r3.UnG0764200.1">
    <property type="protein sequence ID" value="HORVU.MOREX.r3.UnG0764200.1.CDS1"/>
    <property type="gene ID" value="HORVU.MOREX.r3.UnG0764200"/>
</dbReference>
<dbReference type="Gramene" id="HORVU.MOREX.r3.UnG0764900.1">
    <property type="protein sequence ID" value="HORVU.MOREX.r3.UnG0764900.1.CDS1"/>
    <property type="gene ID" value="HORVU.MOREX.r3.UnG0764900"/>
</dbReference>
<dbReference type="Gramene" id="HORVU.MOREX.r3.UnG0766480.1">
    <property type="protein sequence ID" value="HORVU.MOREX.r3.UnG0766480.1.CDS1"/>
    <property type="gene ID" value="HORVU.MOREX.r3.UnG0766480"/>
</dbReference>
<dbReference type="Gramene" id="HORVU.MOREX.r3.UnG0767090.1">
    <property type="protein sequence ID" value="HORVU.MOREX.r3.UnG0767090.1.CDS1"/>
    <property type="gene ID" value="HORVU.MOREX.r3.UnG0767090"/>
</dbReference>
<dbReference type="Gramene" id="HORVU.MOREX.r3.UnG0770510.1">
    <property type="protein sequence ID" value="HORVU.MOREX.r3.UnG0770510.1.CDS1"/>
    <property type="gene ID" value="HORVU.MOREX.r3.UnG0770510"/>
</dbReference>
<dbReference type="Gramene" id="HORVU.MOREX.r3.UnG0772490.1">
    <property type="protein sequence ID" value="HORVU.MOREX.r3.UnG0772490.1.CDS1"/>
    <property type="gene ID" value="HORVU.MOREX.r3.UnG0772490"/>
</dbReference>
<dbReference type="Gramene" id="HORVU.MOREX.r3.UnG0772870.1">
    <property type="protein sequence ID" value="HORVU.MOREX.r3.UnG0772870.1.CDS1"/>
    <property type="gene ID" value="HORVU.MOREX.r3.UnG0772870"/>
</dbReference>
<dbReference type="Gramene" id="HORVU.MOREX.r3.UnG0774210.1">
    <property type="protein sequence ID" value="HORVU.MOREX.r3.UnG0774210.1.CDS1"/>
    <property type="gene ID" value="HORVU.MOREX.r3.UnG0774210"/>
</dbReference>
<dbReference type="Gramene" id="HORVU.MOREX.r3.UnG0775100.1">
    <property type="protein sequence ID" value="HORVU.MOREX.r3.UnG0775100.1.CDS1"/>
    <property type="gene ID" value="HORVU.MOREX.r3.UnG0775100"/>
</dbReference>
<dbReference type="Gramene" id="HORVU.MOREX.r3.UnG0776440.1">
    <property type="protein sequence ID" value="HORVU.MOREX.r3.UnG0776440.1.CDS1"/>
    <property type="gene ID" value="HORVU.MOREX.r3.UnG0776440"/>
</dbReference>
<dbReference type="Gramene" id="HORVU.MOREX.r3.UnG0779010.1">
    <property type="protein sequence ID" value="HORVU.MOREX.r3.UnG0779010.1.CDS1"/>
    <property type="gene ID" value="HORVU.MOREX.r3.UnG0779010"/>
</dbReference>
<dbReference type="Gramene" id="HORVU.MOREX.r3.UnG0779800.1">
    <property type="protein sequence ID" value="HORVU.MOREX.r3.UnG0779800.1.CDS1"/>
    <property type="gene ID" value="HORVU.MOREX.r3.UnG0779800"/>
</dbReference>
<dbReference type="Gramene" id="HORVU.MOREX.r3.UnG0781330.1">
    <property type="protein sequence ID" value="HORVU.MOREX.r3.UnG0781330.1.CDS1"/>
    <property type="gene ID" value="HORVU.MOREX.r3.UnG0781330"/>
</dbReference>
<dbReference type="Gramene" id="HORVU.MOREX.r3.UnG0785270.1">
    <property type="protein sequence ID" value="HORVU.MOREX.r3.UnG0785270.1.CDS1"/>
    <property type="gene ID" value="HORVU.MOREX.r3.UnG0785270"/>
</dbReference>
<dbReference type="Gramene" id="HORVU.MOREX.r3.UnG0787950.1">
    <property type="protein sequence ID" value="HORVU.MOREX.r3.UnG0787950.1.CDS1"/>
    <property type="gene ID" value="HORVU.MOREX.r3.UnG0787950"/>
</dbReference>
<dbReference type="Gramene" id="HORVU.MOREX.r3.UnG0789400.1">
    <property type="protein sequence ID" value="HORVU.MOREX.r3.UnG0789400.1.CDS1"/>
    <property type="gene ID" value="HORVU.MOREX.r3.UnG0789400"/>
</dbReference>
<dbReference type="Gramene" id="HORVU.MOREX.r3.UnG0791800.1">
    <property type="protein sequence ID" value="HORVU.MOREX.r3.UnG0791800.1.CDS1"/>
    <property type="gene ID" value="HORVU.MOREX.r3.UnG0791800"/>
</dbReference>
<dbReference type="Gramene" id="HORVU.MOREX.r3.UnG0794730.1">
    <property type="protein sequence ID" value="HORVU.MOREX.r3.UnG0794730.1.CDS1"/>
    <property type="gene ID" value="HORVU.MOREX.r3.UnG0794730"/>
</dbReference>
<dbReference type="Gramene" id="HORVU.MOREX.r3.UnG0796310.1">
    <property type="protein sequence ID" value="HORVU.MOREX.r3.UnG0796310.1.CDS1"/>
    <property type="gene ID" value="HORVU.MOREX.r3.UnG0796310"/>
</dbReference>
<dbReference type="Gramene" id="HORVU.MOREX.r3.UnG0796820.1">
    <property type="protein sequence ID" value="HORVU.MOREX.r3.UnG0796820.1.CDS1"/>
    <property type="gene ID" value="HORVU.MOREX.r3.UnG0796820"/>
</dbReference>
<dbReference type="Gramene" id="HORVU.MOREX.r3.UnG0797240.1">
    <property type="protein sequence ID" value="HORVU.MOREX.r3.UnG0797240.1.CDS1"/>
    <property type="gene ID" value="HORVU.MOREX.r3.UnG0797240"/>
</dbReference>
<dbReference type="Gramene" id="HORVU.MOREX.r3.UnG0798790.1">
    <property type="protein sequence ID" value="HORVU.MOREX.r3.UnG0798790.1.CDS1"/>
    <property type="gene ID" value="HORVU.MOREX.r3.UnG0798790"/>
</dbReference>
<dbReference type="Gramene" id="HORVU.MOREX.r3.UnG0801270.1">
    <property type="protein sequence ID" value="HORVU.MOREX.r3.UnG0801270.1.CDS1"/>
    <property type="gene ID" value="HORVU.MOREX.r3.UnG0801270"/>
</dbReference>
<dbReference type="Gramene" id="HORVU.MOREX.r3.UnG0803440.1">
    <property type="protein sequence ID" value="HORVU.MOREX.r3.UnG0803440.1.CDS1"/>
    <property type="gene ID" value="HORVU.MOREX.r3.UnG0803440"/>
</dbReference>
<dbReference type="Gramene" id="HORVU.MOREX.r3.UnG0804970.1">
    <property type="protein sequence ID" value="HORVU.MOREX.r3.UnG0804970.1.CDS1"/>
    <property type="gene ID" value="HORVU.MOREX.r3.UnG0804970"/>
</dbReference>
<dbReference type="Gramene" id="HORVU.MOREX.r3.UnG0807780.1">
    <property type="protein sequence ID" value="HORVU.MOREX.r3.UnG0807780.1.CDS1"/>
    <property type="gene ID" value="HORVU.MOREX.r3.UnG0807780"/>
</dbReference>
<dbReference type="Gramene" id="HORVU.MOREX.r3.UnG0808940.1">
    <property type="protein sequence ID" value="HORVU.MOREX.r3.UnG0808940.1.CDS1"/>
    <property type="gene ID" value="HORVU.MOREX.r3.UnG0808940"/>
</dbReference>
<dbReference type="Gramene" id="HORVU.MOREX.r3.UnG0811110.1">
    <property type="protein sequence ID" value="HORVU.MOREX.r3.UnG0811110.1.CDS1"/>
    <property type="gene ID" value="HORVU.MOREX.r3.UnG0811110"/>
</dbReference>
<dbReference type="Gramene" id="HORVU.MOREX.r3.UnG0811310.1">
    <property type="protein sequence ID" value="HORVU.MOREX.r3.UnG0811310.1.CDS1"/>
    <property type="gene ID" value="HORVU.MOREX.r3.UnG0811310"/>
</dbReference>
<dbReference type="Gramene" id="HORVU.MOREX.r3.UnG0811780.1">
    <property type="protein sequence ID" value="HORVU.MOREX.r3.UnG0811780.1.CDS1"/>
    <property type="gene ID" value="HORVU.MOREX.r3.UnG0811780"/>
</dbReference>
<dbReference type="Gramene" id="HORVU.MOREX.r3.UnG0814020.1">
    <property type="protein sequence ID" value="HORVU.MOREX.r3.UnG0814020.1.CDS1"/>
    <property type="gene ID" value="HORVU.MOREX.r3.UnG0814020"/>
</dbReference>
<dbReference type="Gramene" id="HORVU.MOREX.r3.UnG0815490.1">
    <property type="protein sequence ID" value="HORVU.MOREX.r3.UnG0815490.1.CDS1"/>
    <property type="gene ID" value="HORVU.MOREX.r3.UnG0815490"/>
</dbReference>
<dbReference type="Gramene" id="HORVU.MOREX.r3.UnG0816610.1">
    <property type="protein sequence ID" value="HORVU.MOREX.r3.UnG0816610.1.CDS1"/>
    <property type="gene ID" value="HORVU.MOREX.r3.UnG0816610"/>
</dbReference>
<dbReference type="eggNOG" id="ENOG502QWRZ">
    <property type="taxonomic scope" value="Eukaryota"/>
</dbReference>
<dbReference type="HOGENOM" id="CLU_532556_0_0_1"/>
<dbReference type="InParanoid" id="Q76LM0"/>
<dbReference type="OrthoDB" id="597045at2759"/>
<dbReference type="Proteomes" id="UP000011116">
    <property type="component" value="Unassembled WGS sequence"/>
</dbReference>
<dbReference type="ExpressionAtlas" id="Q76LM0">
    <property type="expression patterns" value="differential"/>
</dbReference>
<dbReference type="GO" id="GO:0009507">
    <property type="term" value="C:chloroplast"/>
    <property type="evidence" value="ECO:0007669"/>
    <property type="project" value="UniProtKB-SubCell"/>
</dbReference>
<dbReference type="GO" id="GO:0003723">
    <property type="term" value="F:RNA binding"/>
    <property type="evidence" value="ECO:0007669"/>
    <property type="project" value="UniProtKB-KW"/>
</dbReference>
<dbReference type="GO" id="GO:0006397">
    <property type="term" value="P:mRNA processing"/>
    <property type="evidence" value="ECO:0007669"/>
    <property type="project" value="UniProtKB-KW"/>
</dbReference>
<dbReference type="GO" id="GO:0008380">
    <property type="term" value="P:RNA splicing"/>
    <property type="evidence" value="ECO:0007669"/>
    <property type="project" value="UniProtKB-UniRule"/>
</dbReference>
<dbReference type="GO" id="GO:0008033">
    <property type="term" value="P:tRNA processing"/>
    <property type="evidence" value="ECO:0007669"/>
    <property type="project" value="UniProtKB-KW"/>
</dbReference>
<dbReference type="HAMAP" id="MF_01390">
    <property type="entry name" value="MatK"/>
    <property type="match status" value="1"/>
</dbReference>
<dbReference type="InterPro" id="IPR024937">
    <property type="entry name" value="Domain_X"/>
</dbReference>
<dbReference type="InterPro" id="IPR002866">
    <property type="entry name" value="Maturase_MatK"/>
</dbReference>
<dbReference type="InterPro" id="IPR024942">
    <property type="entry name" value="Maturase_MatK_N"/>
</dbReference>
<dbReference type="PANTHER" id="PTHR34811">
    <property type="entry name" value="MATURASE K"/>
    <property type="match status" value="1"/>
</dbReference>
<dbReference type="PANTHER" id="PTHR34811:SF1">
    <property type="entry name" value="MATURASE K"/>
    <property type="match status" value="1"/>
</dbReference>
<dbReference type="Pfam" id="PF01348">
    <property type="entry name" value="Intron_maturas2"/>
    <property type="match status" value="1"/>
</dbReference>
<dbReference type="Pfam" id="PF01824">
    <property type="entry name" value="MatK_N"/>
    <property type="match status" value="1"/>
</dbReference>
<geneLocation type="chloroplast"/>
<gene>
    <name evidence="1" type="primary">matK</name>
</gene>
<reference key="1">
    <citation type="journal article" date="2002" name="Genome">
        <title>Molecular phylogeny of the genus Hordeum using three chloroplast DNA sequences.</title>
        <authorList>
            <person name="Nishikawa T."/>
            <person name="Salomon B."/>
            <person name="Komatsuda T."/>
            <person name="von Bothmer R."/>
            <person name="Kadowaki K."/>
        </authorList>
    </citation>
    <scope>NUCLEOTIDE SEQUENCE [GENOMIC DNA]</scope>
    <source>
        <strain>H7514A</strain>
    </source>
</reference>
<keyword id="KW-0150">Chloroplast</keyword>
<keyword id="KW-0507">mRNA processing</keyword>
<keyword id="KW-0934">Plastid</keyword>
<keyword id="KW-1185">Reference proteome</keyword>
<keyword id="KW-0694">RNA-binding</keyword>
<keyword id="KW-0819">tRNA processing</keyword>